<reference key="1">
    <citation type="journal article" date="2004" name="J. Mol. Microbiol. Biotechnol.">
        <title>The complete genome sequence of Bacillus licheniformis DSM13, an organism with great industrial potential.</title>
        <authorList>
            <person name="Veith B."/>
            <person name="Herzberg C."/>
            <person name="Steckel S."/>
            <person name="Feesche J."/>
            <person name="Maurer K.H."/>
            <person name="Ehrenreich P."/>
            <person name="Baeumer S."/>
            <person name="Henne A."/>
            <person name="Liesegang H."/>
            <person name="Merkl R."/>
            <person name="Ehrenreich A."/>
            <person name="Gottschalk G."/>
        </authorList>
    </citation>
    <scope>NUCLEOTIDE SEQUENCE [LARGE SCALE GENOMIC DNA]</scope>
    <source>
        <strain>ATCC 14580 / DSM 13 / JCM 2505 / CCUG 7422 / NBRC 12200 / NCIMB 9375 / NCTC 10341 / NRRL NRS-1264 / Gibson 46</strain>
    </source>
</reference>
<reference key="2">
    <citation type="journal article" date="2004" name="Genome Biol.">
        <title>Complete genome sequence of the industrial bacterium Bacillus licheniformis and comparisons with closely related Bacillus species.</title>
        <authorList>
            <person name="Rey M.W."/>
            <person name="Ramaiya P."/>
            <person name="Nelson B.A."/>
            <person name="Brody-Karpin S.D."/>
            <person name="Zaretsky E.J."/>
            <person name="Tang M."/>
            <person name="Lopez de Leon A."/>
            <person name="Xiang H."/>
            <person name="Gusti V."/>
            <person name="Clausen I.G."/>
            <person name="Olsen P.B."/>
            <person name="Rasmussen M.D."/>
            <person name="Andersen J.T."/>
            <person name="Joergensen P.L."/>
            <person name="Larsen T.S."/>
            <person name="Sorokin A."/>
            <person name="Bolotin A."/>
            <person name="Lapidus A."/>
            <person name="Galleron N."/>
            <person name="Ehrlich S.D."/>
            <person name="Berka R.M."/>
        </authorList>
    </citation>
    <scope>NUCLEOTIDE SEQUENCE [LARGE SCALE GENOMIC DNA]</scope>
    <source>
        <strain>ATCC 14580 / DSM 13 / JCM 2505 / CCUG 7422 / NBRC 12200 / NCIMB 9375 / NCTC 10341 / NRRL NRS-1264 / Gibson 46</strain>
    </source>
</reference>
<keyword id="KW-1003">Cell membrane</keyword>
<keyword id="KW-0472">Membrane</keyword>
<keyword id="KW-1185">Reference proteome</keyword>
<keyword id="KW-0812">Transmembrane</keyword>
<keyword id="KW-1133">Transmembrane helix</keyword>
<sequence length="154" mass="16165">MFTQANLFLILLLAIALIAKNQSLIIAVSVLLLIKLIGLDQKLFPAIQSKGINWGVTVITIAVLVPIATGEIGFKQLGEAMKSYYAWIALGAGILVALIAKNGITLLAEDPHITTALVFGTILAVALFKGVAVGPLIGAGIAYLVMQAVQHFTS</sequence>
<gene>
    <name type="ordered locus">BLi03063</name>
    <name type="ordered locus">BL00400</name>
</gene>
<organism>
    <name type="scientific">Bacillus licheniformis (strain ATCC 14580 / DSM 13 / JCM 2505 / CCUG 7422 / NBRC 12200 / NCIMB 9375 / NCTC 10341 / NRRL NRS-1264 / Gibson 46)</name>
    <dbReference type="NCBI Taxonomy" id="279010"/>
    <lineage>
        <taxon>Bacteria</taxon>
        <taxon>Bacillati</taxon>
        <taxon>Bacillota</taxon>
        <taxon>Bacilli</taxon>
        <taxon>Bacillales</taxon>
        <taxon>Bacillaceae</taxon>
        <taxon>Bacillus</taxon>
    </lineage>
</organism>
<protein>
    <recommendedName>
        <fullName evidence="1">UPF0756 membrane protein BLi03063/BL00400</fullName>
    </recommendedName>
</protein>
<comment type="subcellular location">
    <subcellularLocation>
        <location evidence="1">Cell membrane</location>
        <topology evidence="1">Multi-pass membrane protein</topology>
    </subcellularLocation>
</comment>
<comment type="similarity">
    <text evidence="1">Belongs to the UPF0756 family.</text>
</comment>
<proteinExistence type="inferred from homology"/>
<dbReference type="EMBL" id="CP000002">
    <property type="protein sequence ID" value="AAU24569.1"/>
    <property type="molecule type" value="Genomic_DNA"/>
</dbReference>
<dbReference type="EMBL" id="AE017333">
    <property type="protein sequence ID" value="AAU41928.1"/>
    <property type="molecule type" value="Genomic_DNA"/>
</dbReference>
<dbReference type="RefSeq" id="WP_003184322.1">
    <property type="nucleotide sequence ID" value="NC_006322.1"/>
</dbReference>
<dbReference type="SMR" id="Q65G86"/>
<dbReference type="STRING" id="279010.BL00400"/>
<dbReference type="KEGG" id="bld:BLi03063"/>
<dbReference type="KEGG" id="bli:BL00400"/>
<dbReference type="eggNOG" id="COG2707">
    <property type="taxonomic scope" value="Bacteria"/>
</dbReference>
<dbReference type="HOGENOM" id="CLU_125889_1_0_9"/>
<dbReference type="Proteomes" id="UP000000606">
    <property type="component" value="Chromosome"/>
</dbReference>
<dbReference type="GO" id="GO:0005886">
    <property type="term" value="C:plasma membrane"/>
    <property type="evidence" value="ECO:0007669"/>
    <property type="project" value="UniProtKB-SubCell"/>
</dbReference>
<dbReference type="HAMAP" id="MF_01874">
    <property type="entry name" value="UPF0756"/>
    <property type="match status" value="1"/>
</dbReference>
<dbReference type="InterPro" id="IPR007382">
    <property type="entry name" value="UPF0756_TM"/>
</dbReference>
<dbReference type="PANTHER" id="PTHR38452">
    <property type="entry name" value="UPF0756 MEMBRANE PROTEIN YEAL"/>
    <property type="match status" value="1"/>
</dbReference>
<dbReference type="PANTHER" id="PTHR38452:SF1">
    <property type="entry name" value="UPF0756 MEMBRANE PROTEIN YEAL"/>
    <property type="match status" value="1"/>
</dbReference>
<dbReference type="Pfam" id="PF04284">
    <property type="entry name" value="DUF441"/>
    <property type="match status" value="1"/>
</dbReference>
<accession>Q65G86</accession>
<accession>Q62RP1</accession>
<feature type="chain" id="PRO_0000388832" description="UPF0756 membrane protein BLi03063/BL00400">
    <location>
        <begin position="1"/>
        <end position="154"/>
    </location>
</feature>
<feature type="transmembrane region" description="Helical" evidence="1">
    <location>
        <begin position="8"/>
        <end position="28"/>
    </location>
</feature>
<feature type="transmembrane region" description="Helical" evidence="1">
    <location>
        <begin position="54"/>
        <end position="74"/>
    </location>
</feature>
<feature type="transmembrane region" description="Helical" evidence="1">
    <location>
        <begin position="87"/>
        <end position="107"/>
    </location>
</feature>
<feature type="transmembrane region" description="Helical" evidence="1">
    <location>
        <begin position="117"/>
        <end position="137"/>
    </location>
</feature>
<name>Y400_BACLD</name>
<evidence type="ECO:0000255" key="1">
    <source>
        <dbReference type="HAMAP-Rule" id="MF_01874"/>
    </source>
</evidence>